<comment type="function">
    <text evidence="1">Produces ATP from ADP in the presence of a proton gradient across the membrane.</text>
</comment>
<comment type="subunit">
    <text evidence="1">F-type ATPases have 2 components, CF(1) - the catalytic core - and CF(0) - the membrane proton channel. CF(1) has five subunits: alpha(3), beta(3), gamma(1), delta(1), epsilon(1). CF(0) has three main subunits: a, b and c.</text>
</comment>
<comment type="subcellular location">
    <subcellularLocation>
        <location evidence="1">Cell membrane</location>
        <topology evidence="1">Peripheral membrane protein</topology>
    </subcellularLocation>
</comment>
<comment type="similarity">
    <text evidence="1">Belongs to the ATPase epsilon chain family.</text>
</comment>
<proteinExistence type="inferred from homology"/>
<dbReference type="EMBL" id="CP001158">
    <property type="protein sequence ID" value="ACL29843.1"/>
    <property type="molecule type" value="Genomic_DNA"/>
</dbReference>
<dbReference type="SMR" id="B8D6S8"/>
<dbReference type="KEGG" id="bau:BUAPTUC7_009"/>
<dbReference type="HOGENOM" id="CLU_084338_2_0_6"/>
<dbReference type="GO" id="GO:0005886">
    <property type="term" value="C:plasma membrane"/>
    <property type="evidence" value="ECO:0007669"/>
    <property type="project" value="UniProtKB-SubCell"/>
</dbReference>
<dbReference type="GO" id="GO:0045259">
    <property type="term" value="C:proton-transporting ATP synthase complex"/>
    <property type="evidence" value="ECO:0007669"/>
    <property type="project" value="UniProtKB-KW"/>
</dbReference>
<dbReference type="GO" id="GO:0005524">
    <property type="term" value="F:ATP binding"/>
    <property type="evidence" value="ECO:0007669"/>
    <property type="project" value="UniProtKB-UniRule"/>
</dbReference>
<dbReference type="GO" id="GO:0046933">
    <property type="term" value="F:proton-transporting ATP synthase activity, rotational mechanism"/>
    <property type="evidence" value="ECO:0007669"/>
    <property type="project" value="UniProtKB-UniRule"/>
</dbReference>
<dbReference type="CDD" id="cd12152">
    <property type="entry name" value="F1-ATPase_delta"/>
    <property type="match status" value="1"/>
</dbReference>
<dbReference type="FunFam" id="2.60.15.10:FF:000001">
    <property type="entry name" value="ATP synthase epsilon chain"/>
    <property type="match status" value="1"/>
</dbReference>
<dbReference type="Gene3D" id="1.20.5.440">
    <property type="entry name" value="ATP synthase delta/epsilon subunit, C-terminal domain"/>
    <property type="match status" value="1"/>
</dbReference>
<dbReference type="Gene3D" id="2.60.15.10">
    <property type="entry name" value="F0F1 ATP synthase delta/epsilon subunit, N-terminal"/>
    <property type="match status" value="1"/>
</dbReference>
<dbReference type="HAMAP" id="MF_00530">
    <property type="entry name" value="ATP_synth_epsil_bac"/>
    <property type="match status" value="1"/>
</dbReference>
<dbReference type="InterPro" id="IPR036794">
    <property type="entry name" value="ATP_F1_dsu/esu_C_sf"/>
</dbReference>
<dbReference type="InterPro" id="IPR001469">
    <property type="entry name" value="ATP_synth_F1_dsu/esu"/>
</dbReference>
<dbReference type="InterPro" id="IPR020546">
    <property type="entry name" value="ATP_synth_F1_dsu/esu_N"/>
</dbReference>
<dbReference type="InterPro" id="IPR036771">
    <property type="entry name" value="ATPsynth_dsu/esu_N"/>
</dbReference>
<dbReference type="NCBIfam" id="TIGR01216">
    <property type="entry name" value="ATP_synt_epsi"/>
    <property type="match status" value="1"/>
</dbReference>
<dbReference type="NCBIfam" id="NF001847">
    <property type="entry name" value="PRK00571.1-4"/>
    <property type="match status" value="1"/>
</dbReference>
<dbReference type="PANTHER" id="PTHR13822">
    <property type="entry name" value="ATP SYNTHASE DELTA/EPSILON CHAIN"/>
    <property type="match status" value="1"/>
</dbReference>
<dbReference type="PANTHER" id="PTHR13822:SF10">
    <property type="entry name" value="ATP SYNTHASE EPSILON CHAIN, CHLOROPLASTIC"/>
    <property type="match status" value="1"/>
</dbReference>
<dbReference type="Pfam" id="PF02823">
    <property type="entry name" value="ATP-synt_DE_N"/>
    <property type="match status" value="1"/>
</dbReference>
<dbReference type="SUPFAM" id="SSF46604">
    <property type="entry name" value="Epsilon subunit of F1F0-ATP synthase C-terminal domain"/>
    <property type="match status" value="1"/>
</dbReference>
<dbReference type="SUPFAM" id="SSF51344">
    <property type="entry name" value="Epsilon subunit of F1F0-ATP synthase N-terminal domain"/>
    <property type="match status" value="1"/>
</dbReference>
<evidence type="ECO:0000255" key="1">
    <source>
        <dbReference type="HAMAP-Rule" id="MF_00530"/>
    </source>
</evidence>
<keyword id="KW-0066">ATP synthesis</keyword>
<keyword id="KW-1003">Cell membrane</keyword>
<keyword id="KW-0139">CF(1)</keyword>
<keyword id="KW-0375">Hydrogen ion transport</keyword>
<keyword id="KW-0406">Ion transport</keyword>
<keyword id="KW-0472">Membrane</keyword>
<keyword id="KW-0813">Transport</keyword>
<gene>
    <name evidence="1" type="primary">atpC</name>
    <name type="ordered locus">BUAPTUC7_009</name>
</gene>
<accession>B8D6S8</accession>
<reference key="1">
    <citation type="journal article" date="2009" name="Science">
        <title>The dynamics and time scale of ongoing genomic erosion in symbiotic bacteria.</title>
        <authorList>
            <person name="Moran N.A."/>
            <person name="McLaughlin H.J."/>
            <person name="Sorek R."/>
        </authorList>
    </citation>
    <scope>NUCLEOTIDE SEQUENCE [LARGE SCALE GENOMIC DNA]</scope>
    <source>
        <strain>Tuc7</strain>
    </source>
</reference>
<name>ATPE_BUCAT</name>
<sequence>MNFYLDVVSLTKTIFSGFVEKIRVSGSEGELGIYPGHAQLLSILKPGMVYIFHKKDKKEECIYISGGILEVQPSVVSILADVAIHAIDLDRSRILKTKKNAEESIKSNNTKINKDAILLQISKEIAKLRVLEVMDKFK</sequence>
<protein>
    <recommendedName>
        <fullName evidence="1">ATP synthase epsilon chain</fullName>
    </recommendedName>
    <alternativeName>
        <fullName evidence="1">ATP synthase F1 sector epsilon subunit</fullName>
    </alternativeName>
    <alternativeName>
        <fullName evidence="1">F-ATPase epsilon subunit</fullName>
    </alternativeName>
</protein>
<organism>
    <name type="scientific">Buchnera aphidicola subsp. Acyrthosiphon pisum (strain Tuc7)</name>
    <dbReference type="NCBI Taxonomy" id="561501"/>
    <lineage>
        <taxon>Bacteria</taxon>
        <taxon>Pseudomonadati</taxon>
        <taxon>Pseudomonadota</taxon>
        <taxon>Gammaproteobacteria</taxon>
        <taxon>Enterobacterales</taxon>
        <taxon>Erwiniaceae</taxon>
        <taxon>Buchnera</taxon>
    </lineage>
</organism>
<feature type="chain" id="PRO_1000146314" description="ATP synthase epsilon chain">
    <location>
        <begin position="1"/>
        <end position="138"/>
    </location>
</feature>